<evidence type="ECO:0000255" key="1">
    <source>
        <dbReference type="HAMAP-Rule" id="MF_01106"/>
    </source>
</evidence>
<accession>P62059</accession>
<feature type="chain" id="PRO_0000002157" description="Arginine biosynthesis bifunctional protein ArgJ alpha chain" evidence="1">
    <location>
        <begin position="1"/>
        <end position="180"/>
    </location>
</feature>
<feature type="chain" id="PRO_0000002158" description="Arginine biosynthesis bifunctional protein ArgJ beta chain" evidence="1">
    <location>
        <begin position="181"/>
        <end position="386"/>
    </location>
</feature>
<feature type="active site" description="Nucleophile" evidence="1">
    <location>
        <position position="181"/>
    </location>
</feature>
<feature type="binding site" evidence="1">
    <location>
        <position position="148"/>
    </location>
    <ligand>
        <name>substrate</name>
    </ligand>
</feature>
<feature type="binding site" evidence="1">
    <location>
        <position position="170"/>
    </location>
    <ligand>
        <name>substrate</name>
    </ligand>
</feature>
<feature type="binding site" evidence="1">
    <location>
        <position position="181"/>
    </location>
    <ligand>
        <name>substrate</name>
    </ligand>
</feature>
<feature type="binding site" evidence="1">
    <location>
        <position position="261"/>
    </location>
    <ligand>
        <name>substrate</name>
    </ligand>
</feature>
<feature type="binding site" evidence="1">
    <location>
        <position position="381"/>
    </location>
    <ligand>
        <name>substrate</name>
    </ligand>
</feature>
<feature type="binding site" evidence="1">
    <location>
        <position position="386"/>
    </location>
    <ligand>
        <name>substrate</name>
    </ligand>
</feature>
<feature type="site" description="Involved in the stabilization of negative charge on the oxyanion by the formation of the oxyanion hole" evidence="1">
    <location>
        <position position="112"/>
    </location>
</feature>
<feature type="site" description="Involved in the stabilization of negative charge on the oxyanion by the formation of the oxyanion hole" evidence="1">
    <location>
        <position position="113"/>
    </location>
</feature>
<feature type="site" description="Cleavage; by autolysis" evidence="1">
    <location>
        <begin position="180"/>
        <end position="181"/>
    </location>
</feature>
<proteinExistence type="inferred from homology"/>
<keyword id="KW-0012">Acyltransferase</keyword>
<keyword id="KW-0028">Amino-acid biosynthesis</keyword>
<keyword id="KW-0055">Arginine biosynthesis</keyword>
<keyword id="KW-0068">Autocatalytic cleavage</keyword>
<keyword id="KW-0963">Cytoplasm</keyword>
<keyword id="KW-0511">Multifunctional enzyme</keyword>
<keyword id="KW-1185">Reference proteome</keyword>
<keyword id="KW-0808">Transferase</keyword>
<gene>
    <name evidence="1" type="primary">argJ</name>
    <name type="ordered locus">DIP1168</name>
</gene>
<name>ARGJ_CORDI</name>
<protein>
    <recommendedName>
        <fullName evidence="1">Arginine biosynthesis bifunctional protein ArgJ</fullName>
    </recommendedName>
    <domain>
        <recommendedName>
            <fullName evidence="1">Glutamate N-acetyltransferase</fullName>
            <ecNumber evidence="1">2.3.1.35</ecNumber>
        </recommendedName>
        <alternativeName>
            <fullName evidence="1">Ornithine acetyltransferase</fullName>
            <shortName evidence="1">OATase</shortName>
        </alternativeName>
        <alternativeName>
            <fullName evidence="1">Ornithine transacetylase</fullName>
        </alternativeName>
    </domain>
    <domain>
        <recommendedName>
            <fullName evidence="1">Amino-acid acetyltransferase</fullName>
            <ecNumber evidence="1">2.3.1.1</ecNumber>
        </recommendedName>
        <alternativeName>
            <fullName evidence="1">N-acetylglutamate synthase</fullName>
            <shortName evidence="1">AGSase</shortName>
        </alternativeName>
    </domain>
    <component>
        <recommendedName>
            <fullName evidence="1">Arginine biosynthesis bifunctional protein ArgJ alpha chain</fullName>
        </recommendedName>
    </component>
    <component>
        <recommendedName>
            <fullName evidence="1">Arginine biosynthesis bifunctional protein ArgJ beta chain</fullName>
        </recommendedName>
    </component>
</protein>
<sequence length="386" mass="39803">MSSRGVTAPQGFVAAGATAGIKPSGNKDMALVVNQGPEFVGAAVFTRNRVVASPVKYTKKAVANGTLRAVLYNSGNANACNGVQGDKDVHEIVDYLASKLKVDPLDIAACSTGLIGEPLPVTMIKAGVDKLIPALGDNGGEAADSIMTTDTVAKETVVKCNGWTLGGMGKGVGMMAPSLATMLVCLTTDACVTQAQAHAALSKACDVTFNTLDIDGSTSTNDTVILLANGASGITPTESEFNDAVLQACADIADQLQADAEGVTKRVRITVTGTTTDSQALNAARTLGRDNLFKCAMFGSDPNWGRVLAAVGMADADMDPDNISVYFNDQPVCLQSGGTPEARQVDLSGIDIDVRVDLGTGGPGKAFVRTTDLSHQYVEINSAYSS</sequence>
<dbReference type="EC" id="2.3.1.35" evidence="1"/>
<dbReference type="EC" id="2.3.1.1" evidence="1"/>
<dbReference type="EMBL" id="BX248357">
    <property type="protein sequence ID" value="CAE49688.1"/>
    <property type="molecule type" value="Genomic_DNA"/>
</dbReference>
<dbReference type="RefSeq" id="WP_010934856.1">
    <property type="nucleotide sequence ID" value="NC_002935.2"/>
</dbReference>
<dbReference type="SMR" id="P62059"/>
<dbReference type="STRING" id="257309.DIP1168"/>
<dbReference type="KEGG" id="cdi:DIP1168"/>
<dbReference type="HOGENOM" id="CLU_027172_2_0_11"/>
<dbReference type="UniPathway" id="UPA00068">
    <property type="reaction ID" value="UER00106"/>
</dbReference>
<dbReference type="UniPathway" id="UPA00068">
    <property type="reaction ID" value="UER00111"/>
</dbReference>
<dbReference type="Proteomes" id="UP000002198">
    <property type="component" value="Chromosome"/>
</dbReference>
<dbReference type="GO" id="GO:0005737">
    <property type="term" value="C:cytoplasm"/>
    <property type="evidence" value="ECO:0007669"/>
    <property type="project" value="UniProtKB-SubCell"/>
</dbReference>
<dbReference type="GO" id="GO:0004358">
    <property type="term" value="F:glutamate N-acetyltransferase activity"/>
    <property type="evidence" value="ECO:0007669"/>
    <property type="project" value="UniProtKB-UniRule"/>
</dbReference>
<dbReference type="GO" id="GO:0004042">
    <property type="term" value="F:L-glutamate N-acetyltransferase activity"/>
    <property type="evidence" value="ECO:0007669"/>
    <property type="project" value="UniProtKB-UniRule"/>
</dbReference>
<dbReference type="GO" id="GO:0006526">
    <property type="term" value="P:L-arginine biosynthetic process"/>
    <property type="evidence" value="ECO:0007669"/>
    <property type="project" value="UniProtKB-UniRule"/>
</dbReference>
<dbReference type="GO" id="GO:0006592">
    <property type="term" value="P:ornithine biosynthetic process"/>
    <property type="evidence" value="ECO:0007669"/>
    <property type="project" value="TreeGrafter"/>
</dbReference>
<dbReference type="CDD" id="cd02152">
    <property type="entry name" value="OAT"/>
    <property type="match status" value="1"/>
</dbReference>
<dbReference type="Gene3D" id="3.10.20.340">
    <property type="entry name" value="ArgJ beta chain, C-terminal domain"/>
    <property type="match status" value="1"/>
</dbReference>
<dbReference type="Gene3D" id="3.60.70.12">
    <property type="entry name" value="L-amino peptidase D-ALA esterase/amidase"/>
    <property type="match status" value="1"/>
</dbReference>
<dbReference type="HAMAP" id="MF_01106">
    <property type="entry name" value="ArgJ"/>
    <property type="match status" value="1"/>
</dbReference>
<dbReference type="InterPro" id="IPR002813">
    <property type="entry name" value="Arg_biosynth_ArgJ"/>
</dbReference>
<dbReference type="InterPro" id="IPR016117">
    <property type="entry name" value="ArgJ-like_dom_sf"/>
</dbReference>
<dbReference type="InterPro" id="IPR042195">
    <property type="entry name" value="ArgJ_beta_C"/>
</dbReference>
<dbReference type="NCBIfam" id="TIGR00120">
    <property type="entry name" value="ArgJ"/>
    <property type="match status" value="1"/>
</dbReference>
<dbReference type="NCBIfam" id="NF003802">
    <property type="entry name" value="PRK05388.1"/>
    <property type="match status" value="1"/>
</dbReference>
<dbReference type="PANTHER" id="PTHR23100">
    <property type="entry name" value="ARGININE BIOSYNTHESIS BIFUNCTIONAL PROTEIN ARGJ"/>
    <property type="match status" value="1"/>
</dbReference>
<dbReference type="PANTHER" id="PTHR23100:SF0">
    <property type="entry name" value="ARGININE BIOSYNTHESIS BIFUNCTIONAL PROTEIN ARGJ, MITOCHONDRIAL"/>
    <property type="match status" value="1"/>
</dbReference>
<dbReference type="Pfam" id="PF01960">
    <property type="entry name" value="ArgJ"/>
    <property type="match status" value="1"/>
</dbReference>
<dbReference type="SUPFAM" id="SSF56266">
    <property type="entry name" value="DmpA/ArgJ-like"/>
    <property type="match status" value="1"/>
</dbReference>
<comment type="function">
    <text evidence="1">Catalyzes two activities which are involved in the cyclic version of arginine biosynthesis: the synthesis of N-acetylglutamate from glutamate and acetyl-CoA as the acetyl donor, and of ornithine by transacetylation between N(2)-acetylornithine and glutamate.</text>
</comment>
<comment type="catalytic activity">
    <reaction evidence="1">
        <text>N(2)-acetyl-L-ornithine + L-glutamate = N-acetyl-L-glutamate + L-ornithine</text>
        <dbReference type="Rhea" id="RHEA:15349"/>
        <dbReference type="ChEBI" id="CHEBI:29985"/>
        <dbReference type="ChEBI" id="CHEBI:44337"/>
        <dbReference type="ChEBI" id="CHEBI:46911"/>
        <dbReference type="ChEBI" id="CHEBI:57805"/>
        <dbReference type="EC" id="2.3.1.35"/>
    </reaction>
</comment>
<comment type="catalytic activity">
    <reaction evidence="1">
        <text>L-glutamate + acetyl-CoA = N-acetyl-L-glutamate + CoA + H(+)</text>
        <dbReference type="Rhea" id="RHEA:24292"/>
        <dbReference type="ChEBI" id="CHEBI:15378"/>
        <dbReference type="ChEBI" id="CHEBI:29985"/>
        <dbReference type="ChEBI" id="CHEBI:44337"/>
        <dbReference type="ChEBI" id="CHEBI:57287"/>
        <dbReference type="ChEBI" id="CHEBI:57288"/>
        <dbReference type="EC" id="2.3.1.1"/>
    </reaction>
</comment>
<comment type="pathway">
    <text evidence="1">Amino-acid biosynthesis; L-arginine biosynthesis; L-ornithine and N-acetyl-L-glutamate from L-glutamate and N(2)-acetyl-L-ornithine (cyclic): step 1/1.</text>
</comment>
<comment type="pathway">
    <text evidence="1">Amino-acid biosynthesis; L-arginine biosynthesis; N(2)-acetyl-L-ornithine from L-glutamate: step 1/4.</text>
</comment>
<comment type="subunit">
    <text evidence="1">Heterotetramer of two alpha and two beta chains.</text>
</comment>
<comment type="subcellular location">
    <subcellularLocation>
        <location evidence="1">Cytoplasm</location>
    </subcellularLocation>
</comment>
<comment type="similarity">
    <text evidence="1">Belongs to the ArgJ family.</text>
</comment>
<reference key="1">
    <citation type="journal article" date="2003" name="Nucleic Acids Res.">
        <title>The complete genome sequence and analysis of Corynebacterium diphtheriae NCTC13129.</title>
        <authorList>
            <person name="Cerdeno-Tarraga A.-M."/>
            <person name="Efstratiou A."/>
            <person name="Dover L.G."/>
            <person name="Holden M.T.G."/>
            <person name="Pallen M.J."/>
            <person name="Bentley S.D."/>
            <person name="Besra G.S."/>
            <person name="Churcher C.M."/>
            <person name="James K.D."/>
            <person name="De Zoysa A."/>
            <person name="Chillingworth T."/>
            <person name="Cronin A."/>
            <person name="Dowd L."/>
            <person name="Feltwell T."/>
            <person name="Hamlin N."/>
            <person name="Holroyd S."/>
            <person name="Jagels K."/>
            <person name="Moule S."/>
            <person name="Quail M.A."/>
            <person name="Rabbinowitsch E."/>
            <person name="Rutherford K.M."/>
            <person name="Thomson N.R."/>
            <person name="Unwin L."/>
            <person name="Whitehead S."/>
            <person name="Barrell B.G."/>
            <person name="Parkhill J."/>
        </authorList>
    </citation>
    <scope>NUCLEOTIDE SEQUENCE [LARGE SCALE GENOMIC DNA]</scope>
    <source>
        <strain>ATCC 700971 / NCTC 13129 / Biotype gravis</strain>
    </source>
</reference>
<organism>
    <name type="scientific">Corynebacterium diphtheriae (strain ATCC 700971 / NCTC 13129 / Biotype gravis)</name>
    <dbReference type="NCBI Taxonomy" id="257309"/>
    <lineage>
        <taxon>Bacteria</taxon>
        <taxon>Bacillati</taxon>
        <taxon>Actinomycetota</taxon>
        <taxon>Actinomycetes</taxon>
        <taxon>Mycobacteriales</taxon>
        <taxon>Corynebacteriaceae</taxon>
        <taxon>Corynebacterium</taxon>
    </lineage>
</organism>